<evidence type="ECO:0000255" key="1">
    <source>
        <dbReference type="HAMAP-Rule" id="MF_00391"/>
    </source>
</evidence>
<evidence type="ECO:0000256" key="2">
    <source>
        <dbReference type="SAM" id="MobiDB-lite"/>
    </source>
</evidence>
<evidence type="ECO:0000305" key="3"/>
<organism>
    <name type="scientific">Ligilactobacillus salivarius (strain UCC118)</name>
    <name type="common">Lactobacillus salivarius</name>
    <dbReference type="NCBI Taxonomy" id="362948"/>
    <lineage>
        <taxon>Bacteria</taxon>
        <taxon>Bacillati</taxon>
        <taxon>Bacillota</taxon>
        <taxon>Bacilli</taxon>
        <taxon>Lactobacillales</taxon>
        <taxon>Lactobacillaceae</taxon>
        <taxon>Ligilactobacillus</taxon>
    </lineage>
</organism>
<name>RL34_LIGS1</name>
<comment type="similarity">
    <text evidence="1">Belongs to the bacterial ribosomal protein bL34 family.</text>
</comment>
<proteinExistence type="inferred from homology"/>
<protein>
    <recommendedName>
        <fullName evidence="1">Large ribosomal subunit protein bL34</fullName>
    </recommendedName>
    <alternativeName>
        <fullName evidence="3">50S ribosomal protein L34</fullName>
    </alternativeName>
</protein>
<feature type="chain" id="PRO_1000060759" description="Large ribosomal subunit protein bL34">
    <location>
        <begin position="1"/>
        <end position="44"/>
    </location>
</feature>
<feature type="region of interest" description="Disordered" evidence="2">
    <location>
        <begin position="1"/>
        <end position="44"/>
    </location>
</feature>
<feature type="compositionally biased region" description="Basic residues" evidence="2">
    <location>
        <begin position="1"/>
        <end position="22"/>
    </location>
</feature>
<feature type="compositionally biased region" description="Basic residues" evidence="2">
    <location>
        <begin position="31"/>
        <end position="44"/>
    </location>
</feature>
<dbReference type="EMBL" id="CP000233">
    <property type="protein sequence ID" value="ABE00540.1"/>
    <property type="molecule type" value="Genomic_DNA"/>
</dbReference>
<dbReference type="RefSeq" id="WP_003701411.1">
    <property type="nucleotide sequence ID" value="NC_007929.1"/>
</dbReference>
<dbReference type="RefSeq" id="YP_536623.1">
    <property type="nucleotide sequence ID" value="NC_007929.1"/>
</dbReference>
<dbReference type="SMR" id="Q1WRF8"/>
<dbReference type="STRING" id="362948.LSL_1738"/>
<dbReference type="GeneID" id="98320151"/>
<dbReference type="KEGG" id="lsl:LSL_1738"/>
<dbReference type="PATRIC" id="fig|362948.14.peg.1836"/>
<dbReference type="HOGENOM" id="CLU_129938_2_0_9"/>
<dbReference type="OrthoDB" id="9804164at2"/>
<dbReference type="Proteomes" id="UP000006559">
    <property type="component" value="Chromosome"/>
</dbReference>
<dbReference type="GO" id="GO:1990904">
    <property type="term" value="C:ribonucleoprotein complex"/>
    <property type="evidence" value="ECO:0007669"/>
    <property type="project" value="UniProtKB-KW"/>
</dbReference>
<dbReference type="GO" id="GO:0005840">
    <property type="term" value="C:ribosome"/>
    <property type="evidence" value="ECO:0007669"/>
    <property type="project" value="UniProtKB-KW"/>
</dbReference>
<dbReference type="GO" id="GO:0003735">
    <property type="term" value="F:structural constituent of ribosome"/>
    <property type="evidence" value="ECO:0007669"/>
    <property type="project" value="InterPro"/>
</dbReference>
<dbReference type="GO" id="GO:0006412">
    <property type="term" value="P:translation"/>
    <property type="evidence" value="ECO:0007669"/>
    <property type="project" value="UniProtKB-UniRule"/>
</dbReference>
<dbReference type="FunFam" id="1.10.287.3980:FF:000001">
    <property type="entry name" value="Mitochondrial ribosomal protein L34"/>
    <property type="match status" value="1"/>
</dbReference>
<dbReference type="Gene3D" id="1.10.287.3980">
    <property type="match status" value="1"/>
</dbReference>
<dbReference type="HAMAP" id="MF_00391">
    <property type="entry name" value="Ribosomal_bL34"/>
    <property type="match status" value="1"/>
</dbReference>
<dbReference type="InterPro" id="IPR000271">
    <property type="entry name" value="Ribosomal_bL34"/>
</dbReference>
<dbReference type="InterPro" id="IPR020939">
    <property type="entry name" value="Ribosomal_bL34_CS"/>
</dbReference>
<dbReference type="NCBIfam" id="TIGR01030">
    <property type="entry name" value="rpmH_bact"/>
    <property type="match status" value="1"/>
</dbReference>
<dbReference type="PANTHER" id="PTHR14503:SF4">
    <property type="entry name" value="LARGE RIBOSOMAL SUBUNIT PROTEIN BL34M"/>
    <property type="match status" value="1"/>
</dbReference>
<dbReference type="PANTHER" id="PTHR14503">
    <property type="entry name" value="MITOCHONDRIAL RIBOSOMAL PROTEIN 34 FAMILY MEMBER"/>
    <property type="match status" value="1"/>
</dbReference>
<dbReference type="Pfam" id="PF00468">
    <property type="entry name" value="Ribosomal_L34"/>
    <property type="match status" value="1"/>
</dbReference>
<dbReference type="PROSITE" id="PS00784">
    <property type="entry name" value="RIBOSOMAL_L34"/>
    <property type="match status" value="1"/>
</dbReference>
<keyword id="KW-1185">Reference proteome</keyword>
<keyword id="KW-0687">Ribonucleoprotein</keyword>
<keyword id="KW-0689">Ribosomal protein</keyword>
<reference key="1">
    <citation type="journal article" date="2006" name="Proc. Natl. Acad. Sci. U.S.A.">
        <title>Multireplicon genome architecture of Lactobacillus salivarius.</title>
        <authorList>
            <person name="Claesson M.J."/>
            <person name="Li Y."/>
            <person name="Leahy S."/>
            <person name="Canchaya C."/>
            <person name="van Pijkeren J.P."/>
            <person name="Cerdeno-Tarraga A.M."/>
            <person name="Parkhill J."/>
            <person name="Flynn S."/>
            <person name="O'Sullivan G.C."/>
            <person name="Collins J.K."/>
            <person name="Higgins D."/>
            <person name="Shanahan F."/>
            <person name="Fitzgerald G.F."/>
            <person name="van Sinderen D."/>
            <person name="O'Toole P.W."/>
        </authorList>
    </citation>
    <scope>NUCLEOTIDE SEQUENCE [LARGE SCALE GENOMIC DNA]</scope>
    <source>
        <strain>UCC118</strain>
    </source>
</reference>
<gene>
    <name evidence="1" type="primary">rpmH</name>
    <name type="ordered locus">LSL_1738</name>
</gene>
<sequence>MKRTYQPKKRHRQRVHGFRKRMSTSNGRNVLARRRRKGRKVLSA</sequence>
<accession>Q1WRF8</accession>